<evidence type="ECO:0000250" key="1"/>
<evidence type="ECO:0000305" key="2"/>
<proteinExistence type="inferred from homology"/>
<comment type="function">
    <text evidence="1">Plays an essential role in viral DNA replication. Binds the origin of replication and cleaves the dsDNA replicative form I (RFI) and becomes covalently bound to it via phosphotyrosine bond, generating the dsDNA replicative form II (RFII). In turn, viral DNA replication initiates at the 3'-OH of the cleavage site. After one round of rolling circle synthesis, protein ORF2 is linked to the newly synthesized ssDNA and joins the ends of the displaced strand to generate a circular single-stranded molecule ready to be packed into a virion.</text>
</comment>
<comment type="catalytic activity">
    <reaction>
        <text>ATP + (deoxyribonucleotide)n-3'-hydroxyl + 5'-phospho-(deoxyribonucleotide)m = (deoxyribonucleotide)n+m + AMP + diphosphate.</text>
        <dbReference type="EC" id="6.5.1.1"/>
    </reaction>
</comment>
<comment type="similarity">
    <text evidence="2">Belongs to the microviridae Rep protein family.</text>
</comment>
<organism>
    <name type="scientific">Spiroplasma virus 4</name>
    <name type="common">SpV4</name>
    <dbReference type="NCBI Taxonomy" id="2928746"/>
    <lineage>
        <taxon>Viruses</taxon>
        <taxon>Monodnaviria</taxon>
        <taxon>Sangervirae</taxon>
        <taxon>Phixviricota</taxon>
        <taxon>Malgrandaviricetes</taxon>
        <taxon>Petitvirales</taxon>
        <taxon>Microviridae</taxon>
        <taxon>Gokushovirinae</taxon>
        <taxon>Spiromicrovirus</taxon>
        <taxon>Spiromicrovirus SpV4</taxon>
    </lineage>
</organism>
<accession>P11334</accession>
<feature type="chain" id="PRO_0000065792" description="Replication-associated protein ORF2">
    <location>
        <begin position="1"/>
        <end position="320"/>
    </location>
</feature>
<feature type="active site" description="O-(5'-phospho-DNA)-tyrosine intermediate">
    <location>
        <position position="188"/>
    </location>
</feature>
<feature type="active site" description="O-(5'-phospho-DNA)-tyrosine intermediate">
    <location>
        <position position="192"/>
    </location>
</feature>
<organismHost>
    <name type="scientific">Spiroplasma melliferum</name>
    <dbReference type="NCBI Taxonomy" id="2134"/>
</organismHost>
<gene>
    <name type="ORF">ORF2</name>
</gene>
<keyword id="KW-0067">ATP-binding</keyword>
<keyword id="KW-0255">Endonuclease</keyword>
<keyword id="KW-0378">Hydrolase</keyword>
<keyword id="KW-0436">Ligase</keyword>
<keyword id="KW-0540">Nuclease</keyword>
<keyword id="KW-0547">Nucleotide-binding</keyword>
<keyword id="KW-1185">Reference proteome</keyword>
<protein>
    <recommendedName>
        <fullName>Replication-associated protein ORF2</fullName>
        <ecNumber>3.1.21.-</ecNumber>
        <ecNumber>6.5.1.1</ecNumber>
    </recommendedName>
    <alternativeName>
        <fullName>Rep</fullName>
    </alternativeName>
</protein>
<name>REP_SPV4</name>
<sequence>MACLRPLQVHNLKKGEKVNFKHYSNGDVARYDMNKNYIVNDSVPCRKCVGCRLDNSAEWGVRASLEIKSNPKHNWFVTLTYSDEHLVYNALGRPNCVPEHITKFIKSLRKYFERRGHIGIKYLASNEYGTKRMRPHYHICFFNLPLDDLEKTIDSQKGYQQWTSKTISRFWDKGFHTIGELTYHSANYTARYTTKKLGVKDYKALQLVPEKLRMSKGIGLKYFMENKERIYKEDSVLISTDKGIKRFKVPKYFDRRMEREWQDEFYLDYIKEKREKVAKRTLFQRQIVSSRSYTDYLGDEQKKLNNIVKRLTRPLKTGKK</sequence>
<reference key="1">
    <citation type="journal article" date="1987" name="J. Bacteriol.">
        <title>Spiroplasma virus 4: nucleotide sequence of the viral DNA, regulatory signals, and proposed genome organization.</title>
        <authorList>
            <person name="Renaudin J."/>
            <person name="Pascarel M.-C."/>
            <person name="Bove J.-M."/>
        </authorList>
    </citation>
    <scope>NUCLEOTIDE SEQUENCE [GENOMIC DNA]</scope>
</reference>
<dbReference type="EC" id="3.1.21.-"/>
<dbReference type="EC" id="6.5.1.1"/>
<dbReference type="EMBL" id="M17988">
    <property type="status" value="NOT_ANNOTATED_CDS"/>
    <property type="molecule type" value="Genomic_DNA"/>
</dbReference>
<dbReference type="PIR" id="H29825">
    <property type="entry name" value="G2BPSV"/>
</dbReference>
<dbReference type="Proteomes" id="UP000002101">
    <property type="component" value="Genome"/>
</dbReference>
<dbReference type="GO" id="GO:0005524">
    <property type="term" value="F:ATP binding"/>
    <property type="evidence" value="ECO:0007669"/>
    <property type="project" value="UniProtKB-KW"/>
</dbReference>
<dbReference type="GO" id="GO:0003910">
    <property type="term" value="F:DNA ligase (ATP) activity"/>
    <property type="evidence" value="ECO:0007669"/>
    <property type="project" value="UniProtKB-EC"/>
</dbReference>
<dbReference type="GO" id="GO:0004519">
    <property type="term" value="F:endonuclease activity"/>
    <property type="evidence" value="ECO:0007669"/>
    <property type="project" value="UniProtKB-KW"/>
</dbReference>
<dbReference type="InterPro" id="IPR056906">
    <property type="entry name" value="ORF2/G2P_dom"/>
</dbReference>
<dbReference type="Pfam" id="PF23343">
    <property type="entry name" value="REP_ORF2-G2P"/>
    <property type="match status" value="1"/>
</dbReference>